<gene>
    <name evidence="1" type="primary">murC</name>
    <name type="ordered locus">LI1105</name>
</gene>
<organism>
    <name type="scientific">Lawsonia intracellularis (strain PHE/MN1-00)</name>
    <dbReference type="NCBI Taxonomy" id="363253"/>
    <lineage>
        <taxon>Bacteria</taxon>
        <taxon>Pseudomonadati</taxon>
        <taxon>Thermodesulfobacteriota</taxon>
        <taxon>Desulfovibrionia</taxon>
        <taxon>Desulfovibrionales</taxon>
        <taxon>Desulfovibrionaceae</taxon>
        <taxon>Lawsonia</taxon>
    </lineage>
</organism>
<sequence length="453" mass="49238">MNSKIKSIYMVGIGGSGMSGIAEILLNLGYEVHGSDIMESHIIHRLRKLGAIISIGHQAENLGDISVVVKSSAVTEDNPEIQLARQHGIPVIPRAEMLTELMRLRKGVAIAGTHGKTTTTSLTATVFDTAGFDPTVVIGGVLNAYGANARLGQGQYLIAEADESDGSFLLLLPIINVVTNIDLDHLDYYRSFEEIEHAFVTFMNNVPFYGMNVVCGDDPGVQRVLPRVNRQVITYGFESSNHIWAEIIECGIINRFKVIAHGECLGEVILTQPGKHNILNALAAIGVALEVGISPKCCIEGLANFKGVGRRFEYKGEKNGITVIDDYGHHPIEVAATLETARKVFPDRRIVVAFQPHRFSRTQALFGEFCQVLSTVDKLLLTEIYPALEKPIPGINSQNLAQGIQQISKIDVTYYPDIDAVFHALPHVLCAGDVLITLGAGTITTIGPKFLTC</sequence>
<feature type="chain" id="PRO_1000004362" description="UDP-N-acetylmuramate--L-alanine ligase">
    <location>
        <begin position="1"/>
        <end position="453"/>
    </location>
</feature>
<feature type="binding site" evidence="1">
    <location>
        <begin position="112"/>
        <end position="118"/>
    </location>
    <ligand>
        <name>ATP</name>
        <dbReference type="ChEBI" id="CHEBI:30616"/>
    </ligand>
</feature>
<proteinExistence type="inferred from homology"/>
<keyword id="KW-0067">ATP-binding</keyword>
<keyword id="KW-0131">Cell cycle</keyword>
<keyword id="KW-0132">Cell division</keyword>
<keyword id="KW-0133">Cell shape</keyword>
<keyword id="KW-0961">Cell wall biogenesis/degradation</keyword>
<keyword id="KW-0963">Cytoplasm</keyword>
<keyword id="KW-0436">Ligase</keyword>
<keyword id="KW-0547">Nucleotide-binding</keyword>
<keyword id="KW-0573">Peptidoglycan synthesis</keyword>
<keyword id="KW-1185">Reference proteome</keyword>
<evidence type="ECO:0000255" key="1">
    <source>
        <dbReference type="HAMAP-Rule" id="MF_00046"/>
    </source>
</evidence>
<dbReference type="EC" id="6.3.2.8" evidence="1"/>
<dbReference type="EMBL" id="AM180252">
    <property type="protein sequence ID" value="CAJ55159.1"/>
    <property type="molecule type" value="Genomic_DNA"/>
</dbReference>
<dbReference type="RefSeq" id="WP_011527188.1">
    <property type="nucleotide sequence ID" value="NC_008011.1"/>
</dbReference>
<dbReference type="SMR" id="Q1MPB8"/>
<dbReference type="STRING" id="363253.LI1105"/>
<dbReference type="KEGG" id="lip:LI1105"/>
<dbReference type="eggNOG" id="COG0773">
    <property type="taxonomic scope" value="Bacteria"/>
</dbReference>
<dbReference type="HOGENOM" id="CLU_028104_2_2_7"/>
<dbReference type="OrthoDB" id="9804126at2"/>
<dbReference type="UniPathway" id="UPA00219"/>
<dbReference type="Proteomes" id="UP000002430">
    <property type="component" value="Chromosome"/>
</dbReference>
<dbReference type="GO" id="GO:0005737">
    <property type="term" value="C:cytoplasm"/>
    <property type="evidence" value="ECO:0007669"/>
    <property type="project" value="UniProtKB-SubCell"/>
</dbReference>
<dbReference type="GO" id="GO:0005524">
    <property type="term" value="F:ATP binding"/>
    <property type="evidence" value="ECO:0007669"/>
    <property type="project" value="UniProtKB-UniRule"/>
</dbReference>
<dbReference type="GO" id="GO:0008763">
    <property type="term" value="F:UDP-N-acetylmuramate-L-alanine ligase activity"/>
    <property type="evidence" value="ECO:0007669"/>
    <property type="project" value="UniProtKB-UniRule"/>
</dbReference>
<dbReference type="GO" id="GO:0051301">
    <property type="term" value="P:cell division"/>
    <property type="evidence" value="ECO:0007669"/>
    <property type="project" value="UniProtKB-KW"/>
</dbReference>
<dbReference type="GO" id="GO:0071555">
    <property type="term" value="P:cell wall organization"/>
    <property type="evidence" value="ECO:0007669"/>
    <property type="project" value="UniProtKB-KW"/>
</dbReference>
<dbReference type="GO" id="GO:0009252">
    <property type="term" value="P:peptidoglycan biosynthetic process"/>
    <property type="evidence" value="ECO:0007669"/>
    <property type="project" value="UniProtKB-UniRule"/>
</dbReference>
<dbReference type="GO" id="GO:0008360">
    <property type="term" value="P:regulation of cell shape"/>
    <property type="evidence" value="ECO:0007669"/>
    <property type="project" value="UniProtKB-KW"/>
</dbReference>
<dbReference type="Gene3D" id="3.90.190.20">
    <property type="entry name" value="Mur ligase, C-terminal domain"/>
    <property type="match status" value="1"/>
</dbReference>
<dbReference type="Gene3D" id="3.40.1190.10">
    <property type="entry name" value="Mur-like, catalytic domain"/>
    <property type="match status" value="1"/>
</dbReference>
<dbReference type="Gene3D" id="3.40.50.720">
    <property type="entry name" value="NAD(P)-binding Rossmann-like Domain"/>
    <property type="match status" value="1"/>
</dbReference>
<dbReference type="HAMAP" id="MF_00046">
    <property type="entry name" value="MurC"/>
    <property type="match status" value="1"/>
</dbReference>
<dbReference type="InterPro" id="IPR036565">
    <property type="entry name" value="Mur-like_cat_sf"/>
</dbReference>
<dbReference type="InterPro" id="IPR004101">
    <property type="entry name" value="Mur_ligase_C"/>
</dbReference>
<dbReference type="InterPro" id="IPR036615">
    <property type="entry name" value="Mur_ligase_C_dom_sf"/>
</dbReference>
<dbReference type="InterPro" id="IPR013221">
    <property type="entry name" value="Mur_ligase_cen"/>
</dbReference>
<dbReference type="InterPro" id="IPR000713">
    <property type="entry name" value="Mur_ligase_N"/>
</dbReference>
<dbReference type="InterPro" id="IPR050061">
    <property type="entry name" value="MurCDEF_pg_biosynth"/>
</dbReference>
<dbReference type="InterPro" id="IPR005758">
    <property type="entry name" value="UDP-N-AcMur_Ala_ligase_MurC"/>
</dbReference>
<dbReference type="NCBIfam" id="TIGR01082">
    <property type="entry name" value="murC"/>
    <property type="match status" value="1"/>
</dbReference>
<dbReference type="PANTHER" id="PTHR43445:SF3">
    <property type="entry name" value="UDP-N-ACETYLMURAMATE--L-ALANINE LIGASE"/>
    <property type="match status" value="1"/>
</dbReference>
<dbReference type="PANTHER" id="PTHR43445">
    <property type="entry name" value="UDP-N-ACETYLMURAMATE--L-ALANINE LIGASE-RELATED"/>
    <property type="match status" value="1"/>
</dbReference>
<dbReference type="Pfam" id="PF01225">
    <property type="entry name" value="Mur_ligase"/>
    <property type="match status" value="1"/>
</dbReference>
<dbReference type="Pfam" id="PF02875">
    <property type="entry name" value="Mur_ligase_C"/>
    <property type="match status" value="1"/>
</dbReference>
<dbReference type="Pfam" id="PF08245">
    <property type="entry name" value="Mur_ligase_M"/>
    <property type="match status" value="1"/>
</dbReference>
<dbReference type="SUPFAM" id="SSF51984">
    <property type="entry name" value="MurCD N-terminal domain"/>
    <property type="match status" value="1"/>
</dbReference>
<dbReference type="SUPFAM" id="SSF53623">
    <property type="entry name" value="MurD-like peptide ligases, catalytic domain"/>
    <property type="match status" value="1"/>
</dbReference>
<dbReference type="SUPFAM" id="SSF53244">
    <property type="entry name" value="MurD-like peptide ligases, peptide-binding domain"/>
    <property type="match status" value="1"/>
</dbReference>
<accession>Q1MPB8</accession>
<name>MURC_LAWIP</name>
<reference key="1">
    <citation type="submission" date="2005-11" db="EMBL/GenBank/DDBJ databases">
        <title>The complete genome sequence of Lawsonia intracellularis: the causative agent of proliferative enteropathy.</title>
        <authorList>
            <person name="Kaur K."/>
            <person name="Zhang Q."/>
            <person name="Beckler D."/>
            <person name="Munir S."/>
            <person name="Li L."/>
            <person name="Kinsley K."/>
            <person name="Herron L."/>
            <person name="Peterson A."/>
            <person name="May B."/>
            <person name="Singh S."/>
            <person name="Gebhart C."/>
            <person name="Kapur V."/>
        </authorList>
    </citation>
    <scope>NUCLEOTIDE SEQUENCE [LARGE SCALE GENOMIC DNA]</scope>
    <source>
        <strain>PHE/MN1-00</strain>
    </source>
</reference>
<comment type="function">
    <text evidence="1">Cell wall formation.</text>
</comment>
<comment type="catalytic activity">
    <reaction evidence="1">
        <text>UDP-N-acetyl-alpha-D-muramate + L-alanine + ATP = UDP-N-acetyl-alpha-D-muramoyl-L-alanine + ADP + phosphate + H(+)</text>
        <dbReference type="Rhea" id="RHEA:23372"/>
        <dbReference type="ChEBI" id="CHEBI:15378"/>
        <dbReference type="ChEBI" id="CHEBI:30616"/>
        <dbReference type="ChEBI" id="CHEBI:43474"/>
        <dbReference type="ChEBI" id="CHEBI:57972"/>
        <dbReference type="ChEBI" id="CHEBI:70757"/>
        <dbReference type="ChEBI" id="CHEBI:83898"/>
        <dbReference type="ChEBI" id="CHEBI:456216"/>
        <dbReference type="EC" id="6.3.2.8"/>
    </reaction>
</comment>
<comment type="pathway">
    <text evidence="1">Cell wall biogenesis; peptidoglycan biosynthesis.</text>
</comment>
<comment type="subcellular location">
    <subcellularLocation>
        <location evidence="1">Cytoplasm</location>
    </subcellularLocation>
</comment>
<comment type="similarity">
    <text evidence="1">Belongs to the MurCDEF family.</text>
</comment>
<protein>
    <recommendedName>
        <fullName evidence="1">UDP-N-acetylmuramate--L-alanine ligase</fullName>
        <ecNumber evidence="1">6.3.2.8</ecNumber>
    </recommendedName>
    <alternativeName>
        <fullName evidence="1">UDP-N-acetylmuramoyl-L-alanine synthetase</fullName>
    </alternativeName>
</protein>